<dbReference type="EMBL" id="X51338">
    <property type="protein sequence ID" value="CAA35717.1"/>
    <property type="molecule type" value="Genomic_DNA"/>
</dbReference>
<dbReference type="PIR" id="JQ1049">
    <property type="entry name" value="JQ1049"/>
</dbReference>
<dbReference type="RefSeq" id="WP_032488585.1">
    <property type="nucleotide sequence ID" value="NZ_VCBD01000008.1"/>
</dbReference>
<dbReference type="SMR" id="P27873"/>
<dbReference type="eggNOG" id="COG2222">
    <property type="taxonomic scope" value="Bacteria"/>
</dbReference>
<dbReference type="GO" id="GO:0097367">
    <property type="term" value="F:carbohydrate derivative binding"/>
    <property type="evidence" value="ECO:0007669"/>
    <property type="project" value="InterPro"/>
</dbReference>
<dbReference type="GO" id="GO:1901135">
    <property type="term" value="P:carbohydrate derivative metabolic process"/>
    <property type="evidence" value="ECO:0007669"/>
    <property type="project" value="InterPro"/>
</dbReference>
<dbReference type="Gene3D" id="3.40.50.10490">
    <property type="entry name" value="Glucose-6-phosphate isomerase like protein, domain 1"/>
    <property type="match status" value="2"/>
</dbReference>
<dbReference type="InterPro" id="IPR001347">
    <property type="entry name" value="SIS_dom"/>
</dbReference>
<dbReference type="InterPro" id="IPR046348">
    <property type="entry name" value="SIS_dom_sf"/>
</dbReference>
<dbReference type="Pfam" id="PF01380">
    <property type="entry name" value="SIS"/>
    <property type="match status" value="1"/>
</dbReference>
<dbReference type="SUPFAM" id="SSF53697">
    <property type="entry name" value="SIS domain"/>
    <property type="match status" value="1"/>
</dbReference>
<dbReference type="PROSITE" id="PS51464">
    <property type="entry name" value="SIS"/>
    <property type="match status" value="1"/>
</dbReference>
<protein>
    <recommendedName>
        <fullName>Agropine synthesis conjugase</fullName>
    </recommendedName>
</protein>
<sequence>MDLLYAPSSTSAIEMSGQLRATLQQLETVAKFGRATASSISSVLFVSAGAGLAIARSLKRYTDQVGRNLRYEAYASATFVNLMRANPSMVNDPTTLVVLSSKSGMTPETVEAAAFLKDKACKSVVFTASANSKLASFGHQTFSTGITTQAFQAIHMLMLSLIGGILNERENWALLPALISSLQVLPAALFKAAEKGVQPGIAFAARFADDHPLYFIASGCAGIVPHAFGLCVLQERFGFEIHTVDGADFFHSFVETVRTAKRSHYILIIPDDASRPQMLDVKTFFDMRFKEGEISFQVIETTGFDMSGIDPQIGAIVGPMICEAFLKPWAPALAEATGKTMLDPLLHMGKFDYYNCHPA</sequence>
<feature type="chain" id="PRO_0000096244" description="Agropine synthesis conjugase">
    <location>
        <begin position="1"/>
        <end position="359"/>
    </location>
</feature>
<feature type="domain" description="SIS" evidence="1">
    <location>
        <begin position="28"/>
        <end position="171"/>
    </location>
</feature>
<organism>
    <name type="scientific">Rhizobium rhizogenes</name>
    <name type="common">Agrobacterium rhizogenes</name>
    <dbReference type="NCBI Taxonomy" id="359"/>
    <lineage>
        <taxon>Bacteria</taxon>
        <taxon>Pseudomonadati</taxon>
        <taxon>Pseudomonadota</taxon>
        <taxon>Alphaproteobacteria</taxon>
        <taxon>Hyphomicrobiales</taxon>
        <taxon>Rhizobiaceae</taxon>
        <taxon>Rhizobium/Agrobacterium group</taxon>
        <taxon>Rhizobium</taxon>
    </lineage>
</organism>
<name>MAS2_RHIRH</name>
<accession>P27873</accession>
<gene>
    <name type="primary">mas2</name>
</gene>
<evidence type="ECO:0000255" key="1">
    <source>
        <dbReference type="PROSITE-ProRule" id="PRU00797"/>
    </source>
</evidence>
<reference key="1">
    <citation type="journal article" date="1991" name="Plasmid">
        <title>Organization of the agropine synthesis region of the T-DNA of the Ri plasmid from Agrobacterium rhizogenes.</title>
        <authorList>
            <person name="Bouchez D."/>
            <person name="Tourneur J."/>
        </authorList>
    </citation>
    <scope>NUCLEOTIDE SEQUENCE [GENOMIC DNA]</scope>
    <source>
        <strain>A4</strain>
    </source>
</reference>
<geneLocation type="plasmid">
    <name>pRiA4b</name>
</geneLocation>
<keyword id="KW-0614">Plasmid</keyword>
<proteinExistence type="predicted"/>